<sequence length="365" mass="38712">MVPFLRILGIETSCDETAAAVVERDAEGNARVLSDVVLSQLDEHSAYGGVVPEIAARAHVEALDELIEEALNRANVSLDEVDAIAATSGPGLIGGLLVGLMTGKAIARAAGKPLYAVNHLEGHALTARLTDGLAFPYLMLLVSGGHTQLILVRGVGEYQRWGTTIDDALGEAFDKTAKLLGLPYPGGPAVERMARDGNPDRFAFPRPLVGEARLDFSFSGLKTAVRQAAQDIAPISDQDVADICASFQKAISRTLKDRIGRGLQRFKTEFAATDEKPALVVAGGVAANLELRGTLQALCDKNGFRFIAPPLHLCTDNAVMIAWAGLERMATGAAPDPLDVQPRSRWPLDSNAETLIGFGKRGAKA</sequence>
<name>TSAD_RHILW</name>
<accession>B5ZTC5</accession>
<proteinExistence type="inferred from homology"/>
<keyword id="KW-0012">Acyltransferase</keyword>
<keyword id="KW-0963">Cytoplasm</keyword>
<keyword id="KW-0408">Iron</keyword>
<keyword id="KW-0479">Metal-binding</keyword>
<keyword id="KW-1185">Reference proteome</keyword>
<keyword id="KW-0808">Transferase</keyword>
<keyword id="KW-0819">tRNA processing</keyword>
<reference key="1">
    <citation type="journal article" date="2010" name="Stand. Genomic Sci.">
        <title>Complete genome sequence of Rhizobium leguminosarum bv trifolii strain WSM2304, an effective microsymbiont of the South American clover Trifolium polymorphum.</title>
        <authorList>
            <person name="Reeve W."/>
            <person name="O'Hara G."/>
            <person name="Chain P."/>
            <person name="Ardley J."/>
            <person name="Brau L."/>
            <person name="Nandesena K."/>
            <person name="Tiwari R."/>
            <person name="Malfatti S."/>
            <person name="Kiss H."/>
            <person name="Lapidus A."/>
            <person name="Copeland A."/>
            <person name="Nolan M."/>
            <person name="Land M."/>
            <person name="Ivanova N."/>
            <person name="Mavromatis K."/>
            <person name="Markowitz V."/>
            <person name="Kyrpides N."/>
            <person name="Melino V."/>
            <person name="Denton M."/>
            <person name="Yates R."/>
            <person name="Howieson J."/>
        </authorList>
    </citation>
    <scope>NUCLEOTIDE SEQUENCE [LARGE SCALE GENOMIC DNA]</scope>
    <source>
        <strain>WSM2304</strain>
    </source>
</reference>
<dbReference type="EC" id="2.3.1.234" evidence="1"/>
<dbReference type="EMBL" id="CP001191">
    <property type="protein sequence ID" value="ACI56961.1"/>
    <property type="molecule type" value="Genomic_DNA"/>
</dbReference>
<dbReference type="RefSeq" id="WP_003589797.1">
    <property type="nucleotide sequence ID" value="NC_011369.1"/>
</dbReference>
<dbReference type="SMR" id="B5ZTC5"/>
<dbReference type="STRING" id="395492.Rleg2_3698"/>
<dbReference type="KEGG" id="rlt:Rleg2_3698"/>
<dbReference type="eggNOG" id="COG0533">
    <property type="taxonomic scope" value="Bacteria"/>
</dbReference>
<dbReference type="HOGENOM" id="CLU_023208_0_2_5"/>
<dbReference type="Proteomes" id="UP000008330">
    <property type="component" value="Chromosome"/>
</dbReference>
<dbReference type="GO" id="GO:0005737">
    <property type="term" value="C:cytoplasm"/>
    <property type="evidence" value="ECO:0007669"/>
    <property type="project" value="UniProtKB-SubCell"/>
</dbReference>
<dbReference type="GO" id="GO:0005506">
    <property type="term" value="F:iron ion binding"/>
    <property type="evidence" value="ECO:0007669"/>
    <property type="project" value="UniProtKB-UniRule"/>
</dbReference>
<dbReference type="GO" id="GO:0061711">
    <property type="term" value="F:N(6)-L-threonylcarbamoyladenine synthase activity"/>
    <property type="evidence" value="ECO:0007669"/>
    <property type="project" value="UniProtKB-EC"/>
</dbReference>
<dbReference type="GO" id="GO:0002949">
    <property type="term" value="P:tRNA threonylcarbamoyladenosine modification"/>
    <property type="evidence" value="ECO:0007669"/>
    <property type="project" value="UniProtKB-UniRule"/>
</dbReference>
<dbReference type="CDD" id="cd24133">
    <property type="entry name" value="ASKHA_NBD_TsaD_bac"/>
    <property type="match status" value="1"/>
</dbReference>
<dbReference type="FunFam" id="3.30.420.40:FF:000040">
    <property type="entry name" value="tRNA N6-adenosine threonylcarbamoyltransferase"/>
    <property type="match status" value="1"/>
</dbReference>
<dbReference type="Gene3D" id="3.30.420.40">
    <property type="match status" value="2"/>
</dbReference>
<dbReference type="HAMAP" id="MF_01445">
    <property type="entry name" value="TsaD"/>
    <property type="match status" value="1"/>
</dbReference>
<dbReference type="InterPro" id="IPR043129">
    <property type="entry name" value="ATPase_NBD"/>
</dbReference>
<dbReference type="InterPro" id="IPR000905">
    <property type="entry name" value="Gcp-like_dom"/>
</dbReference>
<dbReference type="InterPro" id="IPR017861">
    <property type="entry name" value="KAE1/TsaD"/>
</dbReference>
<dbReference type="InterPro" id="IPR022450">
    <property type="entry name" value="TsaD"/>
</dbReference>
<dbReference type="NCBIfam" id="TIGR00329">
    <property type="entry name" value="gcp_kae1"/>
    <property type="match status" value="1"/>
</dbReference>
<dbReference type="NCBIfam" id="TIGR03723">
    <property type="entry name" value="T6A_TsaD_YgjD"/>
    <property type="match status" value="1"/>
</dbReference>
<dbReference type="PANTHER" id="PTHR11735">
    <property type="entry name" value="TRNA N6-ADENOSINE THREONYLCARBAMOYLTRANSFERASE"/>
    <property type="match status" value="1"/>
</dbReference>
<dbReference type="PANTHER" id="PTHR11735:SF6">
    <property type="entry name" value="TRNA N6-ADENOSINE THREONYLCARBAMOYLTRANSFERASE, MITOCHONDRIAL"/>
    <property type="match status" value="1"/>
</dbReference>
<dbReference type="Pfam" id="PF00814">
    <property type="entry name" value="TsaD"/>
    <property type="match status" value="1"/>
</dbReference>
<dbReference type="PRINTS" id="PR00789">
    <property type="entry name" value="OSIALOPTASE"/>
</dbReference>
<dbReference type="SUPFAM" id="SSF53067">
    <property type="entry name" value="Actin-like ATPase domain"/>
    <property type="match status" value="1"/>
</dbReference>
<gene>
    <name evidence="1" type="primary">tsaD</name>
    <name type="synonym">gcp</name>
    <name type="ordered locus">Rleg2_3698</name>
</gene>
<comment type="function">
    <text evidence="1">Required for the formation of a threonylcarbamoyl group on adenosine at position 37 (t(6)A37) in tRNAs that read codons beginning with adenine. Is involved in the transfer of the threonylcarbamoyl moiety of threonylcarbamoyl-AMP (TC-AMP) to the N6 group of A37, together with TsaE and TsaB. TsaD likely plays a direct catalytic role in this reaction.</text>
</comment>
<comment type="catalytic activity">
    <reaction evidence="1">
        <text>L-threonylcarbamoyladenylate + adenosine(37) in tRNA = N(6)-L-threonylcarbamoyladenosine(37) in tRNA + AMP + H(+)</text>
        <dbReference type="Rhea" id="RHEA:37059"/>
        <dbReference type="Rhea" id="RHEA-COMP:10162"/>
        <dbReference type="Rhea" id="RHEA-COMP:10163"/>
        <dbReference type="ChEBI" id="CHEBI:15378"/>
        <dbReference type="ChEBI" id="CHEBI:73682"/>
        <dbReference type="ChEBI" id="CHEBI:74411"/>
        <dbReference type="ChEBI" id="CHEBI:74418"/>
        <dbReference type="ChEBI" id="CHEBI:456215"/>
        <dbReference type="EC" id="2.3.1.234"/>
    </reaction>
</comment>
<comment type="cofactor">
    <cofactor evidence="1">
        <name>Fe(2+)</name>
        <dbReference type="ChEBI" id="CHEBI:29033"/>
    </cofactor>
    <text evidence="1">Binds 1 Fe(2+) ion per subunit.</text>
</comment>
<comment type="subcellular location">
    <subcellularLocation>
        <location evidence="1">Cytoplasm</location>
    </subcellularLocation>
</comment>
<comment type="similarity">
    <text evidence="1">Belongs to the KAE1 / TsaD family.</text>
</comment>
<evidence type="ECO:0000255" key="1">
    <source>
        <dbReference type="HAMAP-Rule" id="MF_01445"/>
    </source>
</evidence>
<protein>
    <recommendedName>
        <fullName evidence="1">tRNA N6-adenosine threonylcarbamoyltransferase</fullName>
        <ecNumber evidence="1">2.3.1.234</ecNumber>
    </recommendedName>
    <alternativeName>
        <fullName evidence="1">N6-L-threonylcarbamoyladenine synthase</fullName>
        <shortName evidence="1">t(6)A synthase</shortName>
    </alternativeName>
    <alternativeName>
        <fullName evidence="1">t(6)A37 threonylcarbamoyladenosine biosynthesis protein TsaD</fullName>
    </alternativeName>
    <alternativeName>
        <fullName evidence="1">tRNA threonylcarbamoyladenosine biosynthesis protein TsaD</fullName>
    </alternativeName>
</protein>
<feature type="chain" id="PRO_1000146012" description="tRNA N6-adenosine threonylcarbamoyltransferase">
    <location>
        <begin position="1"/>
        <end position="365"/>
    </location>
</feature>
<feature type="binding site" evidence="1">
    <location>
        <position position="119"/>
    </location>
    <ligand>
        <name>Fe cation</name>
        <dbReference type="ChEBI" id="CHEBI:24875"/>
    </ligand>
</feature>
<feature type="binding site" evidence="1">
    <location>
        <position position="123"/>
    </location>
    <ligand>
        <name>Fe cation</name>
        <dbReference type="ChEBI" id="CHEBI:24875"/>
    </ligand>
</feature>
<feature type="binding site" evidence="1">
    <location>
        <begin position="141"/>
        <end position="145"/>
    </location>
    <ligand>
        <name>substrate</name>
    </ligand>
</feature>
<feature type="binding site" evidence="1">
    <location>
        <position position="174"/>
    </location>
    <ligand>
        <name>substrate</name>
    </ligand>
</feature>
<feature type="binding site" evidence="1">
    <location>
        <position position="187"/>
    </location>
    <ligand>
        <name>substrate</name>
    </ligand>
</feature>
<feature type="binding site" evidence="1">
    <location>
        <position position="288"/>
    </location>
    <ligand>
        <name>substrate</name>
    </ligand>
</feature>
<feature type="binding site" evidence="1">
    <location>
        <position position="316"/>
    </location>
    <ligand>
        <name>Fe cation</name>
        <dbReference type="ChEBI" id="CHEBI:24875"/>
    </ligand>
</feature>
<organism>
    <name type="scientific">Rhizobium leguminosarum bv. trifolii (strain WSM2304)</name>
    <dbReference type="NCBI Taxonomy" id="395492"/>
    <lineage>
        <taxon>Bacteria</taxon>
        <taxon>Pseudomonadati</taxon>
        <taxon>Pseudomonadota</taxon>
        <taxon>Alphaproteobacteria</taxon>
        <taxon>Hyphomicrobiales</taxon>
        <taxon>Rhizobiaceae</taxon>
        <taxon>Rhizobium/Agrobacterium group</taxon>
        <taxon>Rhizobium</taxon>
    </lineage>
</organism>